<name>RTP4_MOUSE</name>
<sequence>MLFPDDFSTWEQTFQELMQEEKPGAKWSLHLDKNIVPDGAALGWRQHQQTVLGRFQCSRCCRSWTSAQVMILCHMYPDTLKSQGQARMRIFGQKCQKCFGCQFETPKFSTEIIKRILNNLVNYILQRYYGHRKIALTSNASLGEKVTLDGPHDTRNCEACSLNSHGRCALAHKVKPPRSPSPLPKSSSPSKSCPPPPQTRNTDFGNKTFQDFGNRTFQGCREPPQREIEPPLFLFLSIAAFALFSLFTR</sequence>
<feature type="chain" id="PRO_0000181996" description="Receptor-transporting protein 4">
    <location>
        <begin position="1"/>
        <end position="249"/>
    </location>
</feature>
<feature type="topological domain" description="Cytoplasmic" evidence="2">
    <location>
        <begin position="1"/>
        <end position="227"/>
    </location>
</feature>
<feature type="transmembrane region" description="Helical" evidence="2">
    <location>
        <begin position="228"/>
        <end position="248"/>
    </location>
</feature>
<feature type="zinc finger region" description="3CxxC-type" evidence="2">
    <location>
        <begin position="50"/>
        <end position="162"/>
    </location>
</feature>
<feature type="region of interest" description="Disordered" evidence="3">
    <location>
        <begin position="173"/>
        <end position="208"/>
    </location>
</feature>
<feature type="compositionally biased region" description="Polar residues" evidence="3">
    <location>
        <begin position="199"/>
        <end position="208"/>
    </location>
</feature>
<feature type="mutagenesis site" description="Almost no change in rabies lyssavirus viral genomic RNA binding." evidence="6">
    <original>C</original>
    <variation>S</variation>
    <location>
        <position position="57"/>
    </location>
</feature>
<feature type="mutagenesis site" description="Complete loss of rabies lyssavirus viral genomic RNA binding." evidence="6">
    <original>C</original>
    <variation>S</variation>
    <location>
        <position position="95"/>
    </location>
</feature>
<feature type="mutagenesis site" description="Almost no change in rabies lyssavirus viral genomic RNA binding." evidence="6">
    <original>C</original>
    <variation>S</variation>
    <location>
        <position position="157"/>
    </location>
</feature>
<feature type="sequence conflict" description="In Ref. 2; AAT70673 and 3; BAB31041." evidence="7" ref="2 3">
    <original>K</original>
    <variation>N</variation>
    <location>
        <position position="185"/>
    </location>
</feature>
<feature type="sequence conflict" description="In Ref. 2; AAT70673 and 3; BAB31041." evidence="7" ref="2 3">
    <original>F</original>
    <variation>L</variation>
    <location>
        <position position="209"/>
    </location>
</feature>
<proteinExistence type="evidence at protein level"/>
<reference key="1">
    <citation type="submission" date="1999-12" db="EMBL/GenBank/DDBJ databases">
        <title>Characterization of ifrg15 and ifrg28, two newly identified interferon responsive gene.</title>
        <authorList>
            <person name="Meritet J.F."/>
            <person name="Dron M."/>
            <person name="Tovey M.G."/>
        </authorList>
    </citation>
    <scope>NUCLEOTIDE SEQUENCE [MRNA]</scope>
    <source>
        <strain>DBA/2J</strain>
    </source>
</reference>
<reference key="2">
    <citation type="journal article" date="2004" name="Cell">
        <title>RTP family members induce functional expression of mammalian odorant receptors.</title>
        <authorList>
            <person name="Saito H."/>
            <person name="Kubota M."/>
            <person name="Roberts R.W."/>
            <person name="Chi Q."/>
            <person name="Matsunami H."/>
        </authorList>
    </citation>
    <scope>NUCLEOTIDE SEQUENCE [MRNA]</scope>
    <scope>TISSUE SPECIFICITY</scope>
</reference>
<reference key="3">
    <citation type="journal article" date="2005" name="Science">
        <title>The transcriptional landscape of the mammalian genome.</title>
        <authorList>
            <person name="Carninci P."/>
            <person name="Kasukawa T."/>
            <person name="Katayama S."/>
            <person name="Gough J."/>
            <person name="Frith M.C."/>
            <person name="Maeda N."/>
            <person name="Oyama R."/>
            <person name="Ravasi T."/>
            <person name="Lenhard B."/>
            <person name="Wells C."/>
            <person name="Kodzius R."/>
            <person name="Shimokawa K."/>
            <person name="Bajic V.B."/>
            <person name="Brenner S.E."/>
            <person name="Batalov S."/>
            <person name="Forrest A.R."/>
            <person name="Zavolan M."/>
            <person name="Davis M.J."/>
            <person name="Wilming L.G."/>
            <person name="Aidinis V."/>
            <person name="Allen J.E."/>
            <person name="Ambesi-Impiombato A."/>
            <person name="Apweiler R."/>
            <person name="Aturaliya R.N."/>
            <person name="Bailey T.L."/>
            <person name="Bansal M."/>
            <person name="Baxter L."/>
            <person name="Beisel K.W."/>
            <person name="Bersano T."/>
            <person name="Bono H."/>
            <person name="Chalk A.M."/>
            <person name="Chiu K.P."/>
            <person name="Choudhary V."/>
            <person name="Christoffels A."/>
            <person name="Clutterbuck D.R."/>
            <person name="Crowe M.L."/>
            <person name="Dalla E."/>
            <person name="Dalrymple B.P."/>
            <person name="de Bono B."/>
            <person name="Della Gatta G."/>
            <person name="di Bernardo D."/>
            <person name="Down T."/>
            <person name="Engstrom P."/>
            <person name="Fagiolini M."/>
            <person name="Faulkner G."/>
            <person name="Fletcher C.F."/>
            <person name="Fukushima T."/>
            <person name="Furuno M."/>
            <person name="Futaki S."/>
            <person name="Gariboldi M."/>
            <person name="Georgii-Hemming P."/>
            <person name="Gingeras T.R."/>
            <person name="Gojobori T."/>
            <person name="Green R.E."/>
            <person name="Gustincich S."/>
            <person name="Harbers M."/>
            <person name="Hayashi Y."/>
            <person name="Hensch T.K."/>
            <person name="Hirokawa N."/>
            <person name="Hill D."/>
            <person name="Huminiecki L."/>
            <person name="Iacono M."/>
            <person name="Ikeo K."/>
            <person name="Iwama A."/>
            <person name="Ishikawa T."/>
            <person name="Jakt M."/>
            <person name="Kanapin A."/>
            <person name="Katoh M."/>
            <person name="Kawasawa Y."/>
            <person name="Kelso J."/>
            <person name="Kitamura H."/>
            <person name="Kitano H."/>
            <person name="Kollias G."/>
            <person name="Krishnan S.P."/>
            <person name="Kruger A."/>
            <person name="Kummerfeld S.K."/>
            <person name="Kurochkin I.V."/>
            <person name="Lareau L.F."/>
            <person name="Lazarevic D."/>
            <person name="Lipovich L."/>
            <person name="Liu J."/>
            <person name="Liuni S."/>
            <person name="McWilliam S."/>
            <person name="Madan Babu M."/>
            <person name="Madera M."/>
            <person name="Marchionni L."/>
            <person name="Matsuda H."/>
            <person name="Matsuzawa S."/>
            <person name="Miki H."/>
            <person name="Mignone F."/>
            <person name="Miyake S."/>
            <person name="Morris K."/>
            <person name="Mottagui-Tabar S."/>
            <person name="Mulder N."/>
            <person name="Nakano N."/>
            <person name="Nakauchi H."/>
            <person name="Ng P."/>
            <person name="Nilsson R."/>
            <person name="Nishiguchi S."/>
            <person name="Nishikawa S."/>
            <person name="Nori F."/>
            <person name="Ohara O."/>
            <person name="Okazaki Y."/>
            <person name="Orlando V."/>
            <person name="Pang K.C."/>
            <person name="Pavan W.J."/>
            <person name="Pavesi G."/>
            <person name="Pesole G."/>
            <person name="Petrovsky N."/>
            <person name="Piazza S."/>
            <person name="Reed J."/>
            <person name="Reid J.F."/>
            <person name="Ring B.Z."/>
            <person name="Ringwald M."/>
            <person name="Rost B."/>
            <person name="Ruan Y."/>
            <person name="Salzberg S.L."/>
            <person name="Sandelin A."/>
            <person name="Schneider C."/>
            <person name="Schoenbach C."/>
            <person name="Sekiguchi K."/>
            <person name="Semple C.A."/>
            <person name="Seno S."/>
            <person name="Sessa L."/>
            <person name="Sheng Y."/>
            <person name="Shibata Y."/>
            <person name="Shimada H."/>
            <person name="Shimada K."/>
            <person name="Silva D."/>
            <person name="Sinclair B."/>
            <person name="Sperling S."/>
            <person name="Stupka E."/>
            <person name="Sugiura K."/>
            <person name="Sultana R."/>
            <person name="Takenaka Y."/>
            <person name="Taki K."/>
            <person name="Tammoja K."/>
            <person name="Tan S.L."/>
            <person name="Tang S."/>
            <person name="Taylor M.S."/>
            <person name="Tegner J."/>
            <person name="Teichmann S.A."/>
            <person name="Ueda H.R."/>
            <person name="van Nimwegen E."/>
            <person name="Verardo R."/>
            <person name="Wei C.L."/>
            <person name="Yagi K."/>
            <person name="Yamanishi H."/>
            <person name="Zabarovsky E."/>
            <person name="Zhu S."/>
            <person name="Zimmer A."/>
            <person name="Hide W."/>
            <person name="Bult C."/>
            <person name="Grimmond S.M."/>
            <person name="Teasdale R.D."/>
            <person name="Liu E.T."/>
            <person name="Brusic V."/>
            <person name="Quackenbush J."/>
            <person name="Wahlestedt C."/>
            <person name="Mattick J.S."/>
            <person name="Hume D.A."/>
            <person name="Kai C."/>
            <person name="Sasaki D."/>
            <person name="Tomaru Y."/>
            <person name="Fukuda S."/>
            <person name="Kanamori-Katayama M."/>
            <person name="Suzuki M."/>
            <person name="Aoki J."/>
            <person name="Arakawa T."/>
            <person name="Iida J."/>
            <person name="Imamura K."/>
            <person name="Itoh M."/>
            <person name="Kato T."/>
            <person name="Kawaji H."/>
            <person name="Kawagashira N."/>
            <person name="Kawashima T."/>
            <person name="Kojima M."/>
            <person name="Kondo S."/>
            <person name="Konno H."/>
            <person name="Nakano K."/>
            <person name="Ninomiya N."/>
            <person name="Nishio T."/>
            <person name="Okada M."/>
            <person name="Plessy C."/>
            <person name="Shibata K."/>
            <person name="Shiraki T."/>
            <person name="Suzuki S."/>
            <person name="Tagami M."/>
            <person name="Waki K."/>
            <person name="Watahiki A."/>
            <person name="Okamura-Oho Y."/>
            <person name="Suzuki H."/>
            <person name="Kawai J."/>
            <person name="Hayashizaki Y."/>
        </authorList>
    </citation>
    <scope>NUCLEOTIDE SEQUENCE [LARGE SCALE MRNA]</scope>
    <source>
        <strain>C57BL/6J</strain>
        <tissue>Pancreas</tissue>
        <tissue>Thymus</tissue>
    </source>
</reference>
<reference key="4">
    <citation type="journal article" date="2008" name="Proc. Natl. Acad. Sci. U.S.A.">
        <title>Cell surface targeting of mu-delta opioid receptor heterodimers by RTP4.</title>
        <authorList>
            <person name="Decaillot F.M."/>
            <person name="Rozenfeld R."/>
            <person name="Gupta A."/>
            <person name="Devi L.A."/>
        </authorList>
    </citation>
    <scope>FUNCTION</scope>
    <scope>INTERACTION WITH OPRD1 AND OPRM1</scope>
</reference>
<reference key="5">
    <citation type="journal article" date="2024" name="Vet. Microbiol.">
        <title>RTP4 restricts lyssavirus rabies infection by binding to viral genomic RNA.</title>
        <authorList>
            <person name="Sui B."/>
            <person name="Zheng J."/>
            <person name="Zhao J."/>
            <person name="Fu Z."/>
            <person name="Zhou M."/>
            <person name="Zhao L."/>
        </authorList>
    </citation>
    <scope>FUNCTION</scope>
    <scope>TISSUE SPECIFICITY</scope>
    <scope>INDUCTION BY VIRAL INFECTION</scope>
    <scope>MUTAGENESIS OF CYS-57; CYS-95 AND CYS-157</scope>
</reference>
<gene>
    <name type="primary">Rtp4</name>
    <name type="synonym">Ifrg28</name>
</gene>
<comment type="function">
    <text evidence="1 5 6">Chaperone protein that facilitates the trafficking and functional cell surface expression of some G-protein coupled receptors (GPCRs). Promotes functional expression of the bitter taste receptor TAS2R16 (By similarity). Also promotes functional expression of the opioid receptor heterodimer OPRD1-OPRM1 (PubMed:18836069). In addition, acts as a potent IFN-inducible suppressor of pathogens including lyssavirus rabies, influenza A or yellow fever virus (By similarity). Mechanistically, associates with the viral replicase, binds viral RNA, and thereby suppresses viral genome amplification that replicates at the endoplasmic reticulum (PubMed:38941768). In addition, restores antiviral signaling by interacting with and sequestering influenza virus protein NS1 (By similarity).</text>
</comment>
<comment type="subunit">
    <text evidence="1 5">Interacts with TASR16 (By similarity). Interacts with OPRD1 and OPRM1; the interaction promotes cell surface localization of the OPDR1-OPRM1 heterodimer (PubMed:18836069).</text>
</comment>
<comment type="interaction">
    <interactant intactId="EBI-15731539">
        <id>Q9ER80</id>
    </interactant>
    <interactant intactId="EBI-2615936">
        <id>P32300</id>
        <label>Oprd1</label>
    </interactant>
    <organismsDiffer>false</organismsDiffer>
    <experiments>2</experiments>
</comment>
<comment type="subcellular location">
    <subcellularLocation>
        <location evidence="1">Membrane</location>
        <topology evidence="1">Single-pass type III membrane protein</topology>
    </subcellularLocation>
    <subcellularLocation>
        <location evidence="1">Cytoplasm</location>
    </subcellularLocation>
</comment>
<comment type="tissue specificity">
    <text evidence="4 6">Expressed at low levels in olfactory neurons. Upon viral infection, highly expressed in brain and different cells of nervous tissue (PubMed:38941768).</text>
</comment>
<comment type="induction">
    <text evidence="6">By interferons. Upon rabies lyssavirus infection.</text>
</comment>
<comment type="similarity">
    <text evidence="7">Belongs to the TMEM7 family.</text>
</comment>
<protein>
    <recommendedName>
        <fullName>Receptor-transporting protein 4</fullName>
    </recommendedName>
    <alternativeName>
        <fullName>28 kDa interferon-responsive protein</fullName>
    </alternativeName>
</protein>
<accession>Q9ER80</accession>
<accession>Q9D3D6</accession>
<organism>
    <name type="scientific">Mus musculus</name>
    <name type="common">Mouse</name>
    <dbReference type="NCBI Taxonomy" id="10090"/>
    <lineage>
        <taxon>Eukaryota</taxon>
        <taxon>Metazoa</taxon>
        <taxon>Chordata</taxon>
        <taxon>Craniata</taxon>
        <taxon>Vertebrata</taxon>
        <taxon>Euteleostomi</taxon>
        <taxon>Mammalia</taxon>
        <taxon>Eutheria</taxon>
        <taxon>Euarchontoglires</taxon>
        <taxon>Glires</taxon>
        <taxon>Rodentia</taxon>
        <taxon>Myomorpha</taxon>
        <taxon>Muroidea</taxon>
        <taxon>Muridae</taxon>
        <taxon>Murinae</taxon>
        <taxon>Mus</taxon>
        <taxon>Mus</taxon>
    </lineage>
</organism>
<keyword id="KW-0963">Cytoplasm</keyword>
<keyword id="KW-0472">Membrane</keyword>
<keyword id="KW-0479">Metal-binding</keyword>
<keyword id="KW-1185">Reference proteome</keyword>
<keyword id="KW-0812">Transmembrane</keyword>
<keyword id="KW-1133">Transmembrane helix</keyword>
<keyword id="KW-0862">Zinc</keyword>
<keyword id="KW-0863">Zinc-finger</keyword>
<dbReference type="EMBL" id="AJ251364">
    <property type="protein sequence ID" value="CAC13976.1"/>
    <property type="molecule type" value="mRNA"/>
</dbReference>
<dbReference type="EMBL" id="AY562228">
    <property type="protein sequence ID" value="AAT70673.1"/>
    <property type="molecule type" value="mRNA"/>
</dbReference>
<dbReference type="EMBL" id="AK007477">
    <property type="protein sequence ID" value="BAB25057.1"/>
    <property type="molecule type" value="mRNA"/>
</dbReference>
<dbReference type="EMBL" id="AK018021">
    <property type="protein sequence ID" value="BAB31041.1"/>
    <property type="molecule type" value="mRNA"/>
</dbReference>
<dbReference type="CCDS" id="CCDS28079.1"/>
<dbReference type="RefSeq" id="NP_075875.3">
    <property type="nucleotide sequence ID" value="NM_023386.5"/>
</dbReference>
<dbReference type="RefSeq" id="XP_006522554.1">
    <property type="nucleotide sequence ID" value="XM_006522491.5"/>
</dbReference>
<dbReference type="RefSeq" id="XP_030105116.1">
    <property type="nucleotide sequence ID" value="XM_030249256.2"/>
</dbReference>
<dbReference type="RefSeq" id="XP_030105117.1">
    <property type="nucleotide sequence ID" value="XM_030249257.2"/>
</dbReference>
<dbReference type="RefSeq" id="XP_036015995.1">
    <property type="nucleotide sequence ID" value="XM_036160102.1"/>
</dbReference>
<dbReference type="DIP" id="DIP-46418N"/>
<dbReference type="FunCoup" id="Q9ER80">
    <property type="interactions" value="290"/>
</dbReference>
<dbReference type="IntAct" id="Q9ER80">
    <property type="interactions" value="2"/>
</dbReference>
<dbReference type="STRING" id="10090.ENSMUSP00000147521"/>
<dbReference type="iPTMnet" id="Q9ER80"/>
<dbReference type="PhosphoSitePlus" id="Q9ER80"/>
<dbReference type="PaxDb" id="10090-ENSMUSP00000041091"/>
<dbReference type="PeptideAtlas" id="Q9ER80"/>
<dbReference type="ProteomicsDB" id="260867"/>
<dbReference type="Antibodypedia" id="46841">
    <property type="antibodies" value="104 antibodies from 17 providers"/>
</dbReference>
<dbReference type="DNASU" id="67775"/>
<dbReference type="Ensembl" id="ENSMUST00000038423.6">
    <property type="protein sequence ID" value="ENSMUSP00000041091.6"/>
    <property type="gene ID" value="ENSMUSG00000033355.7"/>
</dbReference>
<dbReference type="Ensembl" id="ENSMUST00000209422.2">
    <property type="protein sequence ID" value="ENSMUSP00000147521.2"/>
    <property type="gene ID" value="ENSMUSG00000033355.7"/>
</dbReference>
<dbReference type="Ensembl" id="ENSMUST00000210901.2">
    <property type="protein sequence ID" value="ENSMUSP00000147442.2"/>
    <property type="gene ID" value="ENSMUSG00000033355.7"/>
</dbReference>
<dbReference type="GeneID" id="67775"/>
<dbReference type="KEGG" id="mmu:67775"/>
<dbReference type="UCSC" id="uc007ytw.2">
    <property type="organism name" value="mouse"/>
</dbReference>
<dbReference type="AGR" id="MGI:1915025"/>
<dbReference type="CTD" id="64108"/>
<dbReference type="MGI" id="MGI:1915025">
    <property type="gene designation" value="Rtp4"/>
</dbReference>
<dbReference type="VEuPathDB" id="HostDB:ENSMUSG00000033355"/>
<dbReference type="eggNOG" id="ENOG502S085">
    <property type="taxonomic scope" value="Eukaryota"/>
</dbReference>
<dbReference type="GeneTree" id="ENSGT00940000162610"/>
<dbReference type="HOGENOM" id="CLU_045693_0_1_1"/>
<dbReference type="InParanoid" id="Q9ER80"/>
<dbReference type="OrthoDB" id="8121437at2759"/>
<dbReference type="PhylomeDB" id="Q9ER80"/>
<dbReference type="TreeFam" id="TF333246"/>
<dbReference type="BioGRID-ORCS" id="67775">
    <property type="hits" value="5 hits in 80 CRISPR screens"/>
</dbReference>
<dbReference type="ChiTaRS" id="Rtp4">
    <property type="organism name" value="mouse"/>
</dbReference>
<dbReference type="PRO" id="PR:Q9ER80"/>
<dbReference type="Proteomes" id="UP000000589">
    <property type="component" value="Chromosome 16"/>
</dbReference>
<dbReference type="RNAct" id="Q9ER80">
    <property type="molecule type" value="protein"/>
</dbReference>
<dbReference type="Bgee" id="ENSMUSG00000033355">
    <property type="expression patterns" value="Expressed in small intestine Peyer's patch and 174 other cell types or tissues"/>
</dbReference>
<dbReference type="ExpressionAtlas" id="Q9ER80">
    <property type="expression patterns" value="baseline and differential"/>
</dbReference>
<dbReference type="GO" id="GO:0016020">
    <property type="term" value="C:membrane"/>
    <property type="evidence" value="ECO:0007669"/>
    <property type="project" value="UniProtKB-SubCell"/>
</dbReference>
<dbReference type="GO" id="GO:0008270">
    <property type="term" value="F:zinc ion binding"/>
    <property type="evidence" value="ECO:0007669"/>
    <property type="project" value="UniProtKB-KW"/>
</dbReference>
<dbReference type="InterPro" id="IPR026096">
    <property type="entry name" value="R-trans_p"/>
</dbReference>
<dbReference type="InterPro" id="IPR027377">
    <property type="entry name" value="ZAR1/RTP1-5-like_Znf-3CxxC"/>
</dbReference>
<dbReference type="PANTHER" id="PTHR14402">
    <property type="entry name" value="RECEPTOR TRANSPORTING PROTEIN"/>
    <property type="match status" value="1"/>
</dbReference>
<dbReference type="PANTHER" id="PTHR14402:SF8">
    <property type="entry name" value="RECEPTOR-TRANSPORTING PROTEIN 4"/>
    <property type="match status" value="1"/>
</dbReference>
<dbReference type="Pfam" id="PF13695">
    <property type="entry name" value="Zn_ribbon_3CxxC"/>
    <property type="match status" value="1"/>
</dbReference>
<dbReference type="SMART" id="SM01328">
    <property type="entry name" value="zf-3CxxC"/>
    <property type="match status" value="1"/>
</dbReference>
<evidence type="ECO:0000250" key="1">
    <source>
        <dbReference type="UniProtKB" id="Q96DX8"/>
    </source>
</evidence>
<evidence type="ECO:0000255" key="2"/>
<evidence type="ECO:0000256" key="3">
    <source>
        <dbReference type="SAM" id="MobiDB-lite"/>
    </source>
</evidence>
<evidence type="ECO:0000269" key="4">
    <source>
    </source>
</evidence>
<evidence type="ECO:0000269" key="5">
    <source>
    </source>
</evidence>
<evidence type="ECO:0000269" key="6">
    <source>
    </source>
</evidence>
<evidence type="ECO:0000305" key="7"/>